<organism>
    <name type="scientific">Mus musculus</name>
    <name type="common">Mouse</name>
    <dbReference type="NCBI Taxonomy" id="10090"/>
    <lineage>
        <taxon>Eukaryota</taxon>
        <taxon>Metazoa</taxon>
        <taxon>Chordata</taxon>
        <taxon>Craniata</taxon>
        <taxon>Vertebrata</taxon>
        <taxon>Euteleostomi</taxon>
        <taxon>Mammalia</taxon>
        <taxon>Eutheria</taxon>
        <taxon>Euarchontoglires</taxon>
        <taxon>Glires</taxon>
        <taxon>Rodentia</taxon>
        <taxon>Myomorpha</taxon>
        <taxon>Muroidea</taxon>
        <taxon>Muridae</taxon>
        <taxon>Murinae</taxon>
        <taxon>Mus</taxon>
        <taxon>Mus</taxon>
    </lineage>
</organism>
<comment type="function">
    <text evidence="2 7 8 10 11">Transcription factor that plays an important role in cellular development and cell survival (PubMed:16467207, PubMed:16920711, PubMed:17537799). Recognizes and binds to the DNA sequence 5'-GCG(T/G)GGGCG-3' (By similarity). Regulates the expression of numerous target genes, including EPO (PubMed:16467207). Plays an essential role for development of the urogenital system. It has a tumor suppressor as well as an oncogenic role in tumor formation. Function may be isoform-specific: isoforms lacking the KTS motif may act as transcription factors. Isoforms containing the KTS motif may bind mRNA and play a role in mRNA metabolism or splicing (PubMed:17167543). Isoform 1 has lower affinity for DNA, and can bind RNA.</text>
</comment>
<comment type="subunit">
    <text evidence="1 5 6 9 11 13">Interacts with ZNF224 via the zinc-finger region. Interacts with WTAP, AMER1 and SRY. Interacts with RBM4 (By similarity). Homodimer. Interacts with WTIP. Interacts with actively translating polysomes. Detected in nuclear ribonucleoprotein (mRNP) particles. Interacts with U2AF2. Interacts with HNRNPU via the zinc-finger region. Isoform 1 and isoform 3 interacts with CITED2.</text>
</comment>
<comment type="interaction">
    <interactant intactId="EBI-8327829">
        <id>P22561</id>
    </interactant>
    <interactant intactId="EBI-4291768">
        <id>Q4JK59</id>
        <label>Tet2</label>
    </interactant>
    <organismsDiffer>false</organismsDiffer>
    <experiments>2</experiments>
</comment>
<comment type="subcellular location">
    <molecule>Isoform 1</molecule>
    <subcellularLocation>
        <location>Nucleus speckle</location>
    </subcellularLocation>
</comment>
<comment type="subcellular location">
    <molecule>Isoform 4</molecule>
    <subcellularLocation>
        <location>Nucleus</location>
        <location>Nucleoplasm</location>
    </subcellularLocation>
</comment>
<comment type="subcellular location">
    <subcellularLocation>
        <location evidence="5">Nucleus</location>
    </subcellularLocation>
    <subcellularLocation>
        <location evidence="1">Nucleus</location>
        <location evidence="1">Nucleolus</location>
    </subcellularLocation>
    <subcellularLocation>
        <location evidence="5">Cytoplasm</location>
    </subcellularLocation>
    <subcellularLocation>
        <location>Nucleus speckle</location>
    </subcellularLocation>
    <text evidence="5">Shuttles between nucleus and cytoplasm.</text>
</comment>
<comment type="alternative products">
    <event type="alternative splicing"/>
    <event type="alternative initiation"/>
    <isoform>
        <id>P22561-1</id>
        <name>1</name>
        <sequence type="displayed"/>
    </isoform>
    <isoform>
        <id>P22561-2</id>
        <name>2</name>
        <sequence type="described" ref="VSP_006868 VSP_006869"/>
    </isoform>
    <isoform>
        <id>P22561-3</id>
        <name>3</name>
        <sequence type="described" ref="VSP_006868"/>
    </isoform>
    <isoform>
        <id>P22561-4</id>
        <name>4</name>
        <sequence type="described" ref="VSP_006869"/>
    </isoform>
    <isoform>
        <id>P22561-5</id>
        <name>5</name>
        <sequence type="described" ref="VSP_037585"/>
    </isoform>
    <isoform>
        <id>P22561-6</id>
        <name>6</name>
        <sequence type="described" ref="VSP_037585 VSP_006868"/>
    </isoform>
</comment>
<comment type="tissue specificity">
    <text evidence="7">Detected in neurons of the embryonic dorsal root ganglion and in Sertoli cells of the adult testis (at protein level). Detected in kidney.</text>
</comment>
<comment type="developmental stage">
    <text evidence="11 12">Expressed in the coelomic epithelium and within some mesonephric tubules of the genital ridge at 10 dpc. Expressed during kidney development.</text>
</comment>
<comment type="domain">
    <text evidence="2">Binds to DNA motifs with the sequence 5'-GCG(T/G)GGGCG-3' via its C2H2-type zinc fingers. Starting from the N-terminus, the second zinc finger binds to the 3'-GCG motif, the middle zinc finger interacts with the central TGG motif, and the C-terminal zinc finger binds to the 5'-GCG motif. Binds double-stranded target DNA, irrespective of the cytosine methylation status. Has reduced affinity for target DNA where the cytosines have been oxidized to 5-hydroxymethylcytosine, 5-formylcytosine or 5-carboxylcytosine.</text>
</comment>
<comment type="domain">
    <text evidence="2">The 9aaTAD motif is a transactivation domain present in a large number of yeast and animal transcription factors.</text>
</comment>
<comment type="RNA editing">
    <location>
        <position position="281" evidence="1"/>
    </location>
    <text evidence="1">Partially edited.</text>
</comment>
<comment type="miscellaneous">
    <text evidence="1">Presence of the KTS motif hinders interactions between DNA and zinc-finger 4.</text>
</comment>
<comment type="miscellaneous">
    <molecule>Isoform 1</molecule>
    <text>Detected in nucleus speckle, may bind mRNA.</text>
</comment>
<comment type="miscellaneous">
    <molecule>Isoform 4</molecule>
    <text evidence="15">Detected in nucleoplasm, probably functions as transcription factor.</text>
</comment>
<comment type="miscellaneous">
    <molecule>Isoform 5</molecule>
    <text evidence="15">Produced by alternative initiation of isoform 1. Extended N-terminus.</text>
</comment>
<comment type="miscellaneous">
    <molecule>Isoform 6</molecule>
    <text evidence="15">Produced by alternative initiation of isoform 1. Extended N-terminus.</text>
</comment>
<comment type="similarity">
    <text evidence="15">Belongs to the EGR C2H2-type zinc-finger protein family.</text>
</comment>
<comment type="sequence caution" evidence="15">
    <conflict type="miscellaneous discrepancy" ref="3"/>
    <text>Unusual initiator. The initiator methionine is coded by a non-canonical CTG leucine codon.</text>
</comment>
<reference key="1">
    <citation type="journal article" date="1991" name="Mol. Cell. Biol.">
        <title>Isolation, characterization, and expression of the murine Wilms' tumor gene (WT1) during kidney development.</title>
        <authorList>
            <person name="Buckler A.J."/>
            <person name="Pelletier J."/>
            <person name="Haber D.A."/>
            <person name="Glaser T."/>
            <person name="Housman D.E."/>
        </authorList>
    </citation>
    <scope>NUCLEOTIDE SEQUENCE [MRNA] (ISOFORMS 1; 2; 3 AND 4)</scope>
</reference>
<reference key="2">
    <citation type="journal article" date="2009" name="PLoS Biol.">
        <title>Lineage-specific biology revealed by a finished genome assembly of the mouse.</title>
        <authorList>
            <person name="Church D.M."/>
            <person name="Goodstadt L."/>
            <person name="Hillier L.W."/>
            <person name="Zody M.C."/>
            <person name="Goldstein S."/>
            <person name="She X."/>
            <person name="Bult C.J."/>
            <person name="Agarwala R."/>
            <person name="Cherry J.L."/>
            <person name="DiCuccio M."/>
            <person name="Hlavina W."/>
            <person name="Kapustin Y."/>
            <person name="Meric P."/>
            <person name="Maglott D."/>
            <person name="Birtle Z."/>
            <person name="Marques A.C."/>
            <person name="Graves T."/>
            <person name="Zhou S."/>
            <person name="Teague B."/>
            <person name="Potamousis K."/>
            <person name="Churas C."/>
            <person name="Place M."/>
            <person name="Herschleb J."/>
            <person name="Runnheim R."/>
            <person name="Forrest D."/>
            <person name="Amos-Landgraf J."/>
            <person name="Schwartz D.C."/>
            <person name="Cheng Z."/>
            <person name="Lindblad-Toh K."/>
            <person name="Eichler E.E."/>
            <person name="Ponting C.P."/>
        </authorList>
    </citation>
    <scope>NUCLEOTIDE SEQUENCE [LARGE SCALE GENOMIC DNA]</scope>
    <source>
        <strain>C57BL/6J</strain>
    </source>
</reference>
<reference key="3">
    <citation type="journal article" date="1996" name="J. Biol. Chem.">
        <title>A non-AUG translational initiation event generates novel WT1 isoforms.</title>
        <authorList>
            <person name="Bruening W."/>
            <person name="Pelletier J."/>
        </authorList>
    </citation>
    <scope>ALTERNATIVE INITIATION</scope>
    <scope>ALTERNATIVE SPLICING (ISOFORMS 5 AND 6)</scope>
</reference>
<reference key="4">
    <citation type="journal article" date="1998" name="Genes Dev.">
        <title>WT1 interacts with the splicing factor U2AF65 in an isoform-dependent manner and can be incorporated into spliceosomes.</title>
        <authorList>
            <person name="Davies R.C."/>
            <person name="Calvio C."/>
            <person name="Bratt E."/>
            <person name="Larsson S.H."/>
            <person name="Lamond A.I."/>
            <person name="Hastie N.D."/>
        </authorList>
    </citation>
    <scope>INTERACTION WITH U2AF2</scope>
</reference>
<reference key="5">
    <citation type="journal article" date="2004" name="Hum. Mol. Genet.">
        <title>The Wilms' tumour protein (WT1) shuttles between nucleus and cytoplasm and is present in functional polysomes.</title>
        <authorList>
            <person name="Niksic M."/>
            <person name="Slight J."/>
            <person name="Sanford J.R."/>
            <person name="Caceres J.F."/>
            <person name="Hastie N.D."/>
        </authorList>
    </citation>
    <scope>SUBCELLULAR LOCATION</scope>
    <scope>RNA-BINDING</scope>
    <scope>INTERACTION WITH POLYSOMES</scope>
</reference>
<reference key="6">
    <citation type="journal article" date="2004" name="J. Biol. Chem.">
        <title>A WT1 co-regulator controls podocyte phenotype by shuttling between adhesion structures and nucleus.</title>
        <authorList>
            <person name="Srichai M.B."/>
            <person name="Konieczkowski M."/>
            <person name="Padiyar A."/>
            <person name="Konieczkowski D.J."/>
            <person name="Mukherjee A."/>
            <person name="Hayden P.S."/>
            <person name="Kamat S."/>
            <person name="El-Meanawy M.A."/>
            <person name="Khan S."/>
            <person name="Mundel P."/>
            <person name="Lee S.B."/>
            <person name="Bruggeman L.A."/>
            <person name="Schelling J.R."/>
            <person name="Sedor J.R."/>
        </authorList>
    </citation>
    <scope>INTERACTION WITH WTIP</scope>
</reference>
<reference key="7">
    <citation type="journal article" date="2006" name="Biochem. Cell Biol.">
        <title>The Wilms tumour suppressor protein WT1 (+KTS isoform) binds alpha-actinin 1 mRNA via its zinc-finger domain.</title>
        <authorList>
            <person name="Morrison A.A."/>
            <person name="Venables J.P."/>
            <person name="Dellaire G."/>
            <person name="Ladomery M.R."/>
        </authorList>
    </citation>
    <scope>FUNCTION</scope>
</reference>
<reference key="8">
    <citation type="journal article" date="2006" name="Blood">
        <title>Wilms tumor suppressor, Wt1, is a transcriptional activator of the erythropoietin gene.</title>
        <authorList>
            <person name="Dame C."/>
            <person name="Kirschner K.M."/>
            <person name="Bartz K.V."/>
            <person name="Wallach T."/>
            <person name="Hussels C.S."/>
            <person name="Scholz H."/>
        </authorList>
    </citation>
    <scope>FUNCTION</scope>
    <scope>SUBCELLULAR LOCATION</scope>
    <scope>TISSUE SPECIFICITY</scope>
</reference>
<reference key="9">
    <citation type="journal article" date="2006" name="J. Biol. Chem.">
        <title>The Wilms tumor suppressor Wt1 promotes cell adhesion through transcriptional activation of the alpha4integrin gene.</title>
        <authorList>
            <person name="Kirschner K.M."/>
            <person name="Wagner N."/>
            <person name="Wagner K.-D."/>
            <person name="Wellmann S."/>
            <person name="Scholz H."/>
        </authorList>
    </citation>
    <scope>FUNCTION</scope>
    <scope>SUBCELLULAR LOCATION</scope>
</reference>
<reference key="10">
    <citation type="journal article" date="2007" name="Development">
        <title>Adrenal development is initiated by Cited2 and Wt1 through modulation of Sf-1 dosage.</title>
        <authorList>
            <person name="Val P."/>
            <person name="Martinez-Barbera J.P."/>
            <person name="Swain A."/>
        </authorList>
    </citation>
    <scope>FUNCTION</scope>
    <scope>INTERACTION WITH CITED2</scope>
    <scope>DEVELOPMENTAL STAGE</scope>
</reference>
<reference key="11">
    <citation type="journal article" date="2007" name="Oncogene">
        <title>hnRNP-U directly interacts with WT1 and modulates WT1 transcriptional activation.</title>
        <authorList>
            <person name="Spraggon L."/>
            <person name="Dudnakova T."/>
            <person name="Slight J."/>
            <person name="Lustig-Yariv O."/>
            <person name="Cotterell J."/>
            <person name="Hastie N."/>
            <person name="Miles C."/>
        </authorList>
    </citation>
    <scope>INTERACTION WITH HNRNPU</scope>
    <scope>SUBCELLULAR LOCATION</scope>
</reference>
<reference key="12">
    <citation type="journal article" date="2009" name="Hum. Mol. Genet.">
        <title>The transcription co-factor CITED2 functions during sex determination and early gonad development.</title>
        <authorList>
            <person name="Buaas F.W."/>
            <person name="Val P."/>
            <person name="Swain A."/>
        </authorList>
    </citation>
    <scope>DEVELOPMENTAL STAGE</scope>
</reference>
<name>WT1_MOUSE</name>
<feature type="chain" id="PRO_0000047132" description="Wilms tumor protein homolog">
    <location>
        <begin position="1"/>
        <end position="449"/>
    </location>
</feature>
<feature type="zinc finger region" description="C2H2-type 1" evidence="3">
    <location>
        <begin position="323"/>
        <end position="347"/>
    </location>
</feature>
<feature type="zinc finger region" description="C2H2-type 2" evidence="3">
    <location>
        <begin position="353"/>
        <end position="377"/>
    </location>
</feature>
<feature type="zinc finger region" description="C2H2-type 3" evidence="3">
    <location>
        <begin position="383"/>
        <end position="405"/>
    </location>
</feature>
<feature type="zinc finger region" description="C2H2-type 4" evidence="3">
    <location>
        <begin position="414"/>
        <end position="438"/>
    </location>
</feature>
<feature type="region of interest" description="Disordered" evidence="4">
    <location>
        <begin position="49"/>
        <end position="84"/>
    </location>
</feature>
<feature type="region of interest" description="Important for interaction with target DNA" evidence="1">
    <location>
        <begin position="367"/>
        <end position="381"/>
    </location>
</feature>
<feature type="region of interest" description="Important for interaction with target DNA" evidence="1">
    <location>
        <begin position="393"/>
        <end position="401"/>
    </location>
</feature>
<feature type="short sequence motif" description="9aaTAD" evidence="2">
    <location>
        <begin position="236"/>
        <end position="244"/>
    </location>
</feature>
<feature type="short sequence motif" description="KTS motif" evidence="1">
    <location>
        <begin position="408"/>
        <end position="410"/>
    </location>
</feature>
<feature type="compositionally biased region" description="Pro residues" evidence="4">
    <location>
        <begin position="55"/>
        <end position="69"/>
    </location>
</feature>
<feature type="site" description="Important for interaction with target DNA" evidence="1">
    <location>
        <position position="424"/>
    </location>
</feature>
<feature type="site" description="Important for interaction with target DNA" evidence="1">
    <location>
        <position position="430"/>
    </location>
</feature>
<feature type="cross-link" description="Glycyl lysine isopeptide (Lys-Gly) (interchain with G-Cter in SUMO)" evidence="1">
    <location>
        <position position="73"/>
    </location>
</feature>
<feature type="cross-link" description="Glycyl lysine isopeptide (Lys-Gly) (interchain with G-Cter in SUMO)" evidence="1">
    <location>
        <position position="177"/>
    </location>
</feature>
<feature type="cross-link" description="Glycyl lysine isopeptide (Lys-Gly) (interchain with G-Cter in SUMO2)" evidence="2">
    <location>
        <position position="444"/>
    </location>
</feature>
<feature type="splice variant" id="VSP_037585" description="In isoform 5 and isoform 6." evidence="15">
    <original>M</original>
    <variation>MDFLLSQEPASTCVPEPASQHTLRREPGCVQQPEQPGDRGPRSAWAKSSAENPQDRRSGEPSASEPHLM</variation>
    <location>
        <position position="1"/>
    </location>
</feature>
<feature type="splice variant" id="VSP_006868" description="In isoform 2, isoform 3 and isoform 6." evidence="14">
    <location>
        <begin position="250"/>
        <end position="266"/>
    </location>
</feature>
<feature type="splice variant" id="VSP_006869" description="In isoform 2 and isoform 4." evidence="14">
    <location>
        <begin position="408"/>
        <end position="410"/>
    </location>
</feature>
<feature type="sequence variant" description="In RNA edited version.">
    <original>L</original>
    <variation>P</variation>
    <location>
        <position position="281"/>
    </location>
</feature>
<feature type="sequence conflict" description="In Ref. 2; CAM18169." evidence="15" ref="2">
    <original>R</original>
    <variation>A</variation>
    <location>
        <position position="33"/>
    </location>
</feature>
<feature type="sequence conflict" description="In Ref. 2; CAM18169." evidence="15" ref="2">
    <original>I</original>
    <variation>T</variation>
    <location>
        <position position="269"/>
    </location>
</feature>
<feature type="sequence conflict" description="In Ref. 2; CAM18169." evidence="15" ref="2">
    <original>HV</original>
    <variation>QL</variation>
    <location>
        <begin position="446"/>
        <end position="447"/>
    </location>
</feature>
<gene>
    <name type="primary">Wt1</name>
    <name type="synonym">Wt-1</name>
</gene>
<protein>
    <recommendedName>
        <fullName>Wilms tumor protein homolog</fullName>
    </recommendedName>
</protein>
<sequence>MGSDVRDLNALLPAVSSLGGGGGGCGLPVSGARQWAPVLDFAPPGASAYGSLGGPAPPPAPPPPPPPPHSFIKQEPSWGGAEPHEEQCLSAFTLHFSGQFTGTAGACRYGPFGPPPPSQASSGQARMFPNAPYLPSCLESQPTIRNQGYSTVTFDGAPSYGHTPSHHAAQFPNHSFKHEDPMGQQGSLGEQQYSVPPPVYGCHTPTDSCTGSQALLLRTPYSSDNLYQMTSQLECMTWNQMNLGATLKGMAAGSSSSVKWTEGQSNHGIGYESENHTAPILCGAQYRIHTHGVFRGIQDVRRVSGVAPTLVRSASETSEKRPFMCAYPGCNKRYFKLSHLQMHSRKHTGEKPYQCDFKDCERRFSRSDQLKRHQRRHTGVKPFQCKTCQRKFSRSDHLKTHTRTHTGKTSEKPFSCRWHSCQKKFARSDELVRHHNMHQRNMTKLHVAL</sequence>
<proteinExistence type="evidence at protein level"/>
<keyword id="KW-0024">Alternative initiation</keyword>
<keyword id="KW-0025">Alternative splicing</keyword>
<keyword id="KW-0963">Cytoplasm</keyword>
<keyword id="KW-0238">DNA-binding</keyword>
<keyword id="KW-1017">Isopeptide bond</keyword>
<keyword id="KW-0479">Metal-binding</keyword>
<keyword id="KW-0539">Nucleus</keyword>
<keyword id="KW-1185">Reference proteome</keyword>
<keyword id="KW-0677">Repeat</keyword>
<keyword id="KW-0691">RNA editing</keyword>
<keyword id="KW-0694">RNA-binding</keyword>
<keyword id="KW-0804">Transcription</keyword>
<keyword id="KW-0805">Transcription regulation</keyword>
<keyword id="KW-0043">Tumor suppressor</keyword>
<keyword id="KW-0832">Ubl conjugation</keyword>
<keyword id="KW-0862">Zinc</keyword>
<keyword id="KW-0863">Zinc-finger</keyword>
<dbReference type="EMBL" id="M55512">
    <property type="protein sequence ID" value="AAA40573.1"/>
    <property type="molecule type" value="mRNA"/>
</dbReference>
<dbReference type="EMBL" id="AL512584">
    <property type="protein sequence ID" value="CAM18169.2"/>
    <property type="molecule type" value="Genomic_DNA"/>
</dbReference>
<dbReference type="CCDS" id="CCDS16496.2">
    <molecule id="P22561-5"/>
</dbReference>
<dbReference type="PIR" id="A39692">
    <property type="entry name" value="A39692"/>
</dbReference>
<dbReference type="BMRB" id="P22561"/>
<dbReference type="SMR" id="P22561"/>
<dbReference type="FunCoup" id="P22561">
    <property type="interactions" value="1853"/>
</dbReference>
<dbReference type="IntAct" id="P22561">
    <property type="interactions" value="1"/>
</dbReference>
<dbReference type="STRING" id="10090.ENSMUSP00000117891"/>
<dbReference type="PhosphoSitePlus" id="P22561"/>
<dbReference type="PaxDb" id="10090-ENSMUSP00000117891"/>
<dbReference type="ProteomicsDB" id="299699">
    <molecule id="P22561-1"/>
</dbReference>
<dbReference type="ProteomicsDB" id="299700">
    <molecule id="P22561-2"/>
</dbReference>
<dbReference type="ProteomicsDB" id="299701">
    <molecule id="P22561-3"/>
</dbReference>
<dbReference type="ProteomicsDB" id="299702">
    <molecule id="P22561-4"/>
</dbReference>
<dbReference type="ProteomicsDB" id="299703">
    <molecule id="P22561-5"/>
</dbReference>
<dbReference type="ProteomicsDB" id="299704">
    <molecule id="P22561-6"/>
</dbReference>
<dbReference type="DNASU" id="22431"/>
<dbReference type="AGR" id="MGI:98968"/>
<dbReference type="MGI" id="MGI:98968">
    <property type="gene designation" value="Wt1"/>
</dbReference>
<dbReference type="eggNOG" id="KOG1721">
    <property type="taxonomic scope" value="Eukaryota"/>
</dbReference>
<dbReference type="InParanoid" id="P22561"/>
<dbReference type="PhylomeDB" id="P22561"/>
<dbReference type="PRO" id="PR:P22561"/>
<dbReference type="Proteomes" id="UP000000589">
    <property type="component" value="Unplaced"/>
</dbReference>
<dbReference type="RNAct" id="P22561">
    <property type="molecule type" value="protein"/>
</dbReference>
<dbReference type="GO" id="GO:0005737">
    <property type="term" value="C:cytoplasm"/>
    <property type="evidence" value="ECO:0000314"/>
    <property type="project" value="MGI"/>
</dbReference>
<dbReference type="GO" id="GO:0016607">
    <property type="term" value="C:nuclear speck"/>
    <property type="evidence" value="ECO:0000250"/>
    <property type="project" value="UniProtKB"/>
</dbReference>
<dbReference type="GO" id="GO:0005730">
    <property type="term" value="C:nucleolus"/>
    <property type="evidence" value="ECO:0007669"/>
    <property type="project" value="UniProtKB-SubCell"/>
</dbReference>
<dbReference type="GO" id="GO:0005654">
    <property type="term" value="C:nucleoplasm"/>
    <property type="evidence" value="ECO:0000250"/>
    <property type="project" value="UniProtKB"/>
</dbReference>
<dbReference type="GO" id="GO:0005634">
    <property type="term" value="C:nucleus"/>
    <property type="evidence" value="ECO:0000314"/>
    <property type="project" value="UniProtKB"/>
</dbReference>
<dbReference type="GO" id="GO:0070742">
    <property type="term" value="F:C2H2 zinc finger domain binding"/>
    <property type="evidence" value="ECO:0000250"/>
    <property type="project" value="UniProtKB"/>
</dbReference>
<dbReference type="GO" id="GO:0001228">
    <property type="term" value="F:DNA-binding transcription activator activity, RNA polymerase II-specific"/>
    <property type="evidence" value="ECO:0000314"/>
    <property type="project" value="UniProtKB"/>
</dbReference>
<dbReference type="GO" id="GO:0003700">
    <property type="term" value="F:DNA-binding transcription factor activity"/>
    <property type="evidence" value="ECO:0000314"/>
    <property type="project" value="UniProtKB"/>
</dbReference>
<dbReference type="GO" id="GO:0003690">
    <property type="term" value="F:double-stranded DNA binding"/>
    <property type="evidence" value="ECO:0000314"/>
    <property type="project" value="MGI"/>
</dbReference>
<dbReference type="GO" id="GO:0010385">
    <property type="term" value="F:double-stranded methylated DNA binding"/>
    <property type="evidence" value="ECO:0000250"/>
    <property type="project" value="UniProtKB"/>
</dbReference>
<dbReference type="GO" id="GO:0044729">
    <property type="term" value="F:hemi-methylated DNA-binding"/>
    <property type="evidence" value="ECO:0000250"/>
    <property type="project" value="UniProtKB"/>
</dbReference>
<dbReference type="GO" id="GO:0003723">
    <property type="term" value="F:RNA binding"/>
    <property type="evidence" value="ECO:0000314"/>
    <property type="project" value="MGI"/>
</dbReference>
<dbReference type="GO" id="GO:0043565">
    <property type="term" value="F:sequence-specific DNA binding"/>
    <property type="evidence" value="ECO:0000250"/>
    <property type="project" value="UniProtKB"/>
</dbReference>
<dbReference type="GO" id="GO:0000976">
    <property type="term" value="F:transcription cis-regulatory region binding"/>
    <property type="evidence" value="ECO:0000250"/>
    <property type="project" value="UniProtKB"/>
</dbReference>
<dbReference type="GO" id="GO:0008270">
    <property type="term" value="F:zinc ion binding"/>
    <property type="evidence" value="ECO:0000250"/>
    <property type="project" value="UniProtKB"/>
</dbReference>
<dbReference type="GO" id="GO:0035802">
    <property type="term" value="P:adrenal cortex formation"/>
    <property type="evidence" value="ECO:0000315"/>
    <property type="project" value="UniProtKB"/>
</dbReference>
<dbReference type="GO" id="GO:0030325">
    <property type="term" value="P:adrenal gland development"/>
    <property type="evidence" value="ECO:0000315"/>
    <property type="project" value="UniProtKB"/>
</dbReference>
<dbReference type="GO" id="GO:0006915">
    <property type="term" value="P:apoptotic process"/>
    <property type="evidence" value="ECO:0000315"/>
    <property type="project" value="MGI"/>
</dbReference>
<dbReference type="GO" id="GO:0001658">
    <property type="term" value="P:branching involved in ureteric bud morphogenesis"/>
    <property type="evidence" value="ECO:0000315"/>
    <property type="project" value="UniProtKB"/>
</dbReference>
<dbReference type="GO" id="GO:0043010">
    <property type="term" value="P:camera-type eye development"/>
    <property type="evidence" value="ECO:0000315"/>
    <property type="project" value="MGI"/>
</dbReference>
<dbReference type="GO" id="GO:0060923">
    <property type="term" value="P:cardiac muscle cell fate commitment"/>
    <property type="evidence" value="ECO:0000315"/>
    <property type="project" value="BHF-UCL"/>
</dbReference>
<dbReference type="GO" id="GO:0071371">
    <property type="term" value="P:cellular response to gonadotropin stimulus"/>
    <property type="evidence" value="ECO:0000250"/>
    <property type="project" value="UniProtKB"/>
</dbReference>
<dbReference type="GO" id="GO:0060976">
    <property type="term" value="P:coronary vasculature development"/>
    <property type="evidence" value="ECO:0000304"/>
    <property type="project" value="DFLAT"/>
</dbReference>
<dbReference type="GO" id="GO:0060539">
    <property type="term" value="P:diaphragm development"/>
    <property type="evidence" value="ECO:0000315"/>
    <property type="project" value="UniProtKB"/>
</dbReference>
<dbReference type="GO" id="GO:0030855">
    <property type="term" value="P:epithelial cell differentiation"/>
    <property type="evidence" value="ECO:0000315"/>
    <property type="project" value="UniProtKB"/>
</dbReference>
<dbReference type="GO" id="GO:0030317">
    <property type="term" value="P:flagellated sperm motility"/>
    <property type="evidence" value="ECO:0000315"/>
    <property type="project" value="MGI"/>
</dbReference>
<dbReference type="GO" id="GO:0007281">
    <property type="term" value="P:germ cell development"/>
    <property type="evidence" value="ECO:0000315"/>
    <property type="project" value="MGI"/>
</dbReference>
<dbReference type="GO" id="GO:0032835">
    <property type="term" value="P:glomerulus development"/>
    <property type="evidence" value="ECO:0000315"/>
    <property type="project" value="UniProtKB"/>
</dbReference>
<dbReference type="GO" id="GO:0008406">
    <property type="term" value="P:gonad development"/>
    <property type="evidence" value="ECO:0000315"/>
    <property type="project" value="UniProtKB"/>
</dbReference>
<dbReference type="GO" id="GO:0007507">
    <property type="term" value="P:heart development"/>
    <property type="evidence" value="ECO:0000315"/>
    <property type="project" value="UniProtKB"/>
</dbReference>
<dbReference type="GO" id="GO:0001822">
    <property type="term" value="P:kidney development"/>
    <property type="evidence" value="ECO:0000315"/>
    <property type="project" value="UniProtKB"/>
</dbReference>
<dbReference type="GO" id="GO:0030539">
    <property type="term" value="P:male genitalia development"/>
    <property type="evidence" value="ECO:0000315"/>
    <property type="project" value="UniProtKB"/>
</dbReference>
<dbReference type="GO" id="GO:0008584">
    <property type="term" value="P:male gonad development"/>
    <property type="evidence" value="ECO:0000315"/>
    <property type="project" value="MGI"/>
</dbReference>
<dbReference type="GO" id="GO:1900200">
    <property type="term" value="P:mesenchymal cell apoptotic process involved in metanephros development"/>
    <property type="evidence" value="ECO:0000315"/>
    <property type="project" value="MGI"/>
</dbReference>
<dbReference type="GO" id="GO:0060231">
    <property type="term" value="P:mesenchymal to epithelial transition"/>
    <property type="evidence" value="ECO:0000315"/>
    <property type="project" value="UniProtKB"/>
</dbReference>
<dbReference type="GO" id="GO:0001823">
    <property type="term" value="P:mesonephros development"/>
    <property type="evidence" value="ECO:0000315"/>
    <property type="project" value="MGI"/>
</dbReference>
<dbReference type="GO" id="GO:0072278">
    <property type="term" value="P:metanephric comma-shaped body morphogenesis"/>
    <property type="evidence" value="ECO:0000270"/>
    <property type="project" value="UniProtKB"/>
</dbReference>
<dbReference type="GO" id="GO:0072075">
    <property type="term" value="P:metanephric mesenchyme development"/>
    <property type="evidence" value="ECO:0000315"/>
    <property type="project" value="UniProtKB"/>
</dbReference>
<dbReference type="GO" id="GO:0072284">
    <property type="term" value="P:metanephric S-shaped body morphogenesis"/>
    <property type="evidence" value="ECO:0000315"/>
    <property type="project" value="UniProtKB"/>
</dbReference>
<dbReference type="GO" id="GO:0001656">
    <property type="term" value="P:metanephros development"/>
    <property type="evidence" value="ECO:0000315"/>
    <property type="project" value="UniProtKB"/>
</dbReference>
<dbReference type="GO" id="GO:0043066">
    <property type="term" value="P:negative regulation of apoptotic process"/>
    <property type="evidence" value="ECO:0000315"/>
    <property type="project" value="UniProtKB"/>
</dbReference>
<dbReference type="GO" id="GO:0030308">
    <property type="term" value="P:negative regulation of cell growth"/>
    <property type="evidence" value="ECO:0000250"/>
    <property type="project" value="UniProtKB"/>
</dbReference>
<dbReference type="GO" id="GO:0045892">
    <property type="term" value="P:negative regulation of DNA-templated transcription"/>
    <property type="evidence" value="ECO:0000314"/>
    <property type="project" value="UniProtKB"/>
</dbReference>
<dbReference type="GO" id="GO:2000195">
    <property type="term" value="P:negative regulation of female gonad development"/>
    <property type="evidence" value="ECO:0000315"/>
    <property type="project" value="UniProtKB"/>
</dbReference>
<dbReference type="GO" id="GO:1900212">
    <property type="term" value="P:negative regulation of mesenchymal cell apoptotic process involved in metanephros development"/>
    <property type="evidence" value="ECO:0000315"/>
    <property type="project" value="MGI"/>
</dbReference>
<dbReference type="GO" id="GO:0072302">
    <property type="term" value="P:negative regulation of metanephric glomerular mesangial cell proliferation"/>
    <property type="evidence" value="ECO:0000315"/>
    <property type="project" value="UniProtKB"/>
</dbReference>
<dbReference type="GO" id="GO:0000122">
    <property type="term" value="P:negative regulation of transcription by RNA polymerase II"/>
    <property type="evidence" value="ECO:0000266"/>
    <property type="project" value="MGI"/>
</dbReference>
<dbReference type="GO" id="GO:0017148">
    <property type="term" value="P:negative regulation of translation"/>
    <property type="evidence" value="ECO:0000250"/>
    <property type="project" value="UniProtKB"/>
</dbReference>
<dbReference type="GO" id="GO:0072015">
    <property type="term" value="P:podocyte development"/>
    <property type="evidence" value="ECO:0000270"/>
    <property type="project" value="UniProtKB"/>
</dbReference>
<dbReference type="GO" id="GO:0072112">
    <property type="term" value="P:podocyte differentiation"/>
    <property type="evidence" value="ECO:0000314"/>
    <property type="project" value="UniProtKB"/>
</dbReference>
<dbReference type="GO" id="GO:0043065">
    <property type="term" value="P:positive regulation of apoptotic process"/>
    <property type="evidence" value="ECO:0000250"/>
    <property type="project" value="UniProtKB"/>
</dbReference>
<dbReference type="GO" id="GO:0045893">
    <property type="term" value="P:positive regulation of DNA-templated transcription"/>
    <property type="evidence" value="ECO:0000314"/>
    <property type="project" value="UniProtKB"/>
</dbReference>
<dbReference type="GO" id="GO:0060421">
    <property type="term" value="P:positive regulation of heart growth"/>
    <property type="evidence" value="ECO:0000315"/>
    <property type="project" value="UniProtKB"/>
</dbReference>
<dbReference type="GO" id="GO:2000020">
    <property type="term" value="P:positive regulation of male gonad development"/>
    <property type="evidence" value="ECO:0000315"/>
    <property type="project" value="UniProtKB"/>
</dbReference>
<dbReference type="GO" id="GO:2001076">
    <property type="term" value="P:positive regulation of metanephric ureteric bud development"/>
    <property type="evidence" value="ECO:0000315"/>
    <property type="project" value="UniProtKB"/>
</dbReference>
<dbReference type="GO" id="GO:0045944">
    <property type="term" value="P:positive regulation of transcription by RNA polymerase II"/>
    <property type="evidence" value="ECO:0000314"/>
    <property type="project" value="MGI"/>
</dbReference>
<dbReference type="GO" id="GO:0072166">
    <property type="term" value="P:posterior mesonephric tubule development"/>
    <property type="evidence" value="ECO:0000315"/>
    <property type="project" value="UniProtKB"/>
</dbReference>
<dbReference type="GO" id="GO:0003156">
    <property type="term" value="P:regulation of animal organ formation"/>
    <property type="evidence" value="ECO:0000315"/>
    <property type="project" value="UniProtKB"/>
</dbReference>
<dbReference type="GO" id="GO:0006355">
    <property type="term" value="P:regulation of DNA-templated transcription"/>
    <property type="evidence" value="ECO:0000314"/>
    <property type="project" value="MGI"/>
</dbReference>
<dbReference type="GO" id="GO:0010468">
    <property type="term" value="P:regulation of gene expression"/>
    <property type="evidence" value="ECO:0000315"/>
    <property type="project" value="MGI"/>
</dbReference>
<dbReference type="GO" id="GO:0006357">
    <property type="term" value="P:regulation of transcription by RNA polymerase II"/>
    <property type="evidence" value="ECO:0000314"/>
    <property type="project" value="MGI"/>
</dbReference>
<dbReference type="GO" id="GO:0008380">
    <property type="term" value="P:RNA splicing"/>
    <property type="evidence" value="ECO:0000314"/>
    <property type="project" value="UniProtKB"/>
</dbReference>
<dbReference type="GO" id="GO:0072520">
    <property type="term" value="P:seminiferous tubule development"/>
    <property type="evidence" value="ECO:0000315"/>
    <property type="project" value="MGI"/>
</dbReference>
<dbReference type="GO" id="GO:0060009">
    <property type="term" value="P:Sertoli cell development"/>
    <property type="evidence" value="ECO:0000315"/>
    <property type="project" value="MGI"/>
</dbReference>
<dbReference type="GO" id="GO:0007530">
    <property type="term" value="P:sex determination"/>
    <property type="evidence" value="ECO:0000315"/>
    <property type="project" value="MGI"/>
</dbReference>
<dbReference type="GO" id="GO:0007338">
    <property type="term" value="P:single fertilization"/>
    <property type="evidence" value="ECO:0000315"/>
    <property type="project" value="MGI"/>
</dbReference>
<dbReference type="GO" id="GO:0007283">
    <property type="term" value="P:spermatogenesis"/>
    <property type="evidence" value="ECO:0000315"/>
    <property type="project" value="MGI"/>
</dbReference>
<dbReference type="GO" id="GO:0007356">
    <property type="term" value="P:thorax and anterior abdomen determination"/>
    <property type="evidence" value="ECO:0000315"/>
    <property type="project" value="UniProtKB"/>
</dbReference>
<dbReference type="GO" id="GO:0009888">
    <property type="term" value="P:tissue development"/>
    <property type="evidence" value="ECO:0000315"/>
    <property type="project" value="MGI"/>
</dbReference>
<dbReference type="GO" id="GO:0001657">
    <property type="term" value="P:ureteric bud development"/>
    <property type="evidence" value="ECO:0000315"/>
    <property type="project" value="UniProtKB"/>
</dbReference>
<dbReference type="GO" id="GO:0001570">
    <property type="term" value="P:vasculogenesis"/>
    <property type="evidence" value="ECO:0000315"/>
    <property type="project" value="MGI"/>
</dbReference>
<dbReference type="GO" id="GO:0061032">
    <property type="term" value="P:visceral serous pericardium development"/>
    <property type="evidence" value="ECO:0000315"/>
    <property type="project" value="UniProtKB"/>
</dbReference>
<dbReference type="FunFam" id="3.30.160.60:FF:000063">
    <property type="entry name" value="Wilms tumor 1-KTS isoform"/>
    <property type="match status" value="1"/>
</dbReference>
<dbReference type="FunFam" id="3.30.160.60:FF:000228">
    <property type="entry name" value="Wilms tumor 1-KTS isoform"/>
    <property type="match status" value="1"/>
</dbReference>
<dbReference type="Gene3D" id="3.30.160.60">
    <property type="entry name" value="Classic Zinc Finger"/>
    <property type="match status" value="4"/>
</dbReference>
<dbReference type="InterPro" id="IPR000976">
    <property type="entry name" value="Wilms_tumour_N"/>
</dbReference>
<dbReference type="InterPro" id="IPR036236">
    <property type="entry name" value="Znf_C2H2_sf"/>
</dbReference>
<dbReference type="InterPro" id="IPR013087">
    <property type="entry name" value="Znf_C2H2_type"/>
</dbReference>
<dbReference type="PANTHER" id="PTHR23235:SF65">
    <property type="entry name" value="KRUEPPEL-LIKE FACTOR 11"/>
    <property type="match status" value="1"/>
</dbReference>
<dbReference type="PANTHER" id="PTHR23235">
    <property type="entry name" value="KRUEPPEL-LIKE TRANSCRIPTION FACTOR"/>
    <property type="match status" value="1"/>
</dbReference>
<dbReference type="Pfam" id="PF02165">
    <property type="entry name" value="WT1"/>
    <property type="match status" value="1"/>
</dbReference>
<dbReference type="Pfam" id="PF00096">
    <property type="entry name" value="zf-C2H2"/>
    <property type="match status" value="2"/>
</dbReference>
<dbReference type="PRINTS" id="PR00049">
    <property type="entry name" value="WILMSTUMOUR"/>
</dbReference>
<dbReference type="SMART" id="SM00355">
    <property type="entry name" value="ZnF_C2H2"/>
    <property type="match status" value="4"/>
</dbReference>
<dbReference type="SUPFAM" id="SSF57667">
    <property type="entry name" value="beta-beta-alpha zinc fingers"/>
    <property type="match status" value="2"/>
</dbReference>
<dbReference type="PROSITE" id="PS00028">
    <property type="entry name" value="ZINC_FINGER_C2H2_1"/>
    <property type="match status" value="4"/>
</dbReference>
<dbReference type="PROSITE" id="PS50157">
    <property type="entry name" value="ZINC_FINGER_C2H2_2"/>
    <property type="match status" value="4"/>
</dbReference>
<accession>P22561</accession>
<accession>A2A402</accession>
<evidence type="ECO:0000250" key="1"/>
<evidence type="ECO:0000250" key="2">
    <source>
        <dbReference type="UniProtKB" id="P19544"/>
    </source>
</evidence>
<evidence type="ECO:0000255" key="3">
    <source>
        <dbReference type="PROSITE-ProRule" id="PRU00042"/>
    </source>
</evidence>
<evidence type="ECO:0000256" key="4">
    <source>
        <dbReference type="SAM" id="MobiDB-lite"/>
    </source>
</evidence>
<evidence type="ECO:0000269" key="5">
    <source>
    </source>
</evidence>
<evidence type="ECO:0000269" key="6">
    <source>
    </source>
</evidence>
<evidence type="ECO:0000269" key="7">
    <source>
    </source>
</evidence>
<evidence type="ECO:0000269" key="8">
    <source>
    </source>
</evidence>
<evidence type="ECO:0000269" key="9">
    <source>
    </source>
</evidence>
<evidence type="ECO:0000269" key="10">
    <source>
    </source>
</evidence>
<evidence type="ECO:0000269" key="11">
    <source>
    </source>
</evidence>
<evidence type="ECO:0000269" key="12">
    <source>
    </source>
</evidence>
<evidence type="ECO:0000269" key="13">
    <source>
    </source>
</evidence>
<evidence type="ECO:0000303" key="14">
    <source>
    </source>
</evidence>
<evidence type="ECO:0000305" key="15"/>